<protein>
    <recommendedName>
        <fullName evidence="7">Calcium/manganese antiporter SLC30A10</fullName>
    </recommendedName>
    <alternativeName>
        <fullName evidence="8">Solute carrier family 30 member 10</fullName>
    </alternativeName>
</protein>
<dbReference type="EMBL" id="AK136932">
    <property type="protein sequence ID" value="BAE23176.1"/>
    <property type="molecule type" value="mRNA"/>
</dbReference>
<dbReference type="EMBL" id="BC108419">
    <property type="protein sequence ID" value="AAI08420.1"/>
    <property type="molecule type" value="mRNA"/>
</dbReference>
<dbReference type="CCDS" id="CCDS15599.1">
    <molecule id="Q3UVU3-1"/>
</dbReference>
<dbReference type="RefSeq" id="NP_001028458.1">
    <molecule id="Q3UVU3-1"/>
    <property type="nucleotide sequence ID" value="NM_001033286.2"/>
</dbReference>
<dbReference type="SMR" id="Q3UVU3"/>
<dbReference type="FunCoup" id="Q3UVU3">
    <property type="interactions" value="215"/>
</dbReference>
<dbReference type="IntAct" id="Q3UVU3">
    <property type="interactions" value="1"/>
</dbReference>
<dbReference type="STRING" id="10090.ENSMUSP00000053181"/>
<dbReference type="iPTMnet" id="Q3UVU3"/>
<dbReference type="PhosphoSitePlus" id="Q3UVU3"/>
<dbReference type="SwissPalm" id="Q3UVU3"/>
<dbReference type="PaxDb" id="10090-ENSMUSP00000053181"/>
<dbReference type="PeptideAtlas" id="Q3UVU3"/>
<dbReference type="ProteomicsDB" id="275103">
    <molecule id="Q3UVU3-1"/>
</dbReference>
<dbReference type="ProteomicsDB" id="275104">
    <molecule id="Q3UVU3-2"/>
</dbReference>
<dbReference type="Antibodypedia" id="3072">
    <property type="antibodies" value="117 antibodies from 18 providers"/>
</dbReference>
<dbReference type="DNASU" id="226781"/>
<dbReference type="Ensembl" id="ENSMUST00000061093.7">
    <molecule id="Q3UVU3-1"/>
    <property type="protein sequence ID" value="ENSMUSP00000053181.7"/>
    <property type="gene ID" value="ENSMUSG00000026614.8"/>
</dbReference>
<dbReference type="GeneID" id="226781"/>
<dbReference type="KEGG" id="mmu:226781"/>
<dbReference type="UCSC" id="uc007dzk.1">
    <molecule id="Q3UVU3-1"/>
    <property type="organism name" value="mouse"/>
</dbReference>
<dbReference type="UCSC" id="uc007dzl.2">
    <molecule id="Q3UVU3-2"/>
    <property type="organism name" value="mouse"/>
</dbReference>
<dbReference type="AGR" id="MGI:2685058"/>
<dbReference type="CTD" id="55532"/>
<dbReference type="MGI" id="MGI:2685058">
    <property type="gene designation" value="Slc30a10"/>
</dbReference>
<dbReference type="VEuPathDB" id="HostDB:ENSMUSG00000026614"/>
<dbReference type="eggNOG" id="KOG1483">
    <property type="taxonomic scope" value="Eukaryota"/>
</dbReference>
<dbReference type="GeneTree" id="ENSGT00940000159967"/>
<dbReference type="HOGENOM" id="CLU_013430_4_3_1"/>
<dbReference type="InParanoid" id="Q3UVU3"/>
<dbReference type="OMA" id="FQDCASW"/>
<dbReference type="OrthoDB" id="29444at2759"/>
<dbReference type="PhylomeDB" id="Q3UVU3"/>
<dbReference type="TreeFam" id="TF313924"/>
<dbReference type="Reactome" id="R-MMU-425410">
    <property type="pathway name" value="Metal ion SLC transporters"/>
</dbReference>
<dbReference type="BioGRID-ORCS" id="226781">
    <property type="hits" value="1 hit in 76 CRISPR screens"/>
</dbReference>
<dbReference type="ChiTaRS" id="Slc30a10">
    <property type="organism name" value="mouse"/>
</dbReference>
<dbReference type="PRO" id="PR:Q3UVU3"/>
<dbReference type="Proteomes" id="UP000000589">
    <property type="component" value="Chromosome 1"/>
</dbReference>
<dbReference type="RNAct" id="Q3UVU3">
    <property type="molecule type" value="protein"/>
</dbReference>
<dbReference type="Bgee" id="ENSMUSG00000026614">
    <property type="expression patterns" value="Expressed in duodenum and 105 other cell types or tissues"/>
</dbReference>
<dbReference type="ExpressionAtlas" id="Q3UVU3">
    <property type="expression patterns" value="baseline and differential"/>
</dbReference>
<dbReference type="GO" id="GO:0031901">
    <property type="term" value="C:early endosome membrane"/>
    <property type="evidence" value="ECO:0000250"/>
    <property type="project" value="UniProtKB"/>
</dbReference>
<dbReference type="GO" id="GO:0005794">
    <property type="term" value="C:Golgi apparatus"/>
    <property type="evidence" value="ECO:0000250"/>
    <property type="project" value="UniProtKB"/>
</dbReference>
<dbReference type="GO" id="GO:0000139">
    <property type="term" value="C:Golgi membrane"/>
    <property type="evidence" value="ECO:0007669"/>
    <property type="project" value="UniProtKB-SubCell"/>
</dbReference>
<dbReference type="GO" id="GO:0005886">
    <property type="term" value="C:plasma membrane"/>
    <property type="evidence" value="ECO:0000250"/>
    <property type="project" value="UniProtKB"/>
</dbReference>
<dbReference type="GO" id="GO:0055038">
    <property type="term" value="C:recycling endosome membrane"/>
    <property type="evidence" value="ECO:0000250"/>
    <property type="project" value="UniProtKB"/>
</dbReference>
<dbReference type="GO" id="GO:0140983">
    <property type="term" value="F:calcium:manganese antiporter activity"/>
    <property type="evidence" value="ECO:0000250"/>
    <property type="project" value="UniProtKB"/>
</dbReference>
<dbReference type="GO" id="GO:0005385">
    <property type="term" value="F:zinc ion transmembrane transporter activity"/>
    <property type="evidence" value="ECO:0007669"/>
    <property type="project" value="Ensembl"/>
</dbReference>
<dbReference type="GO" id="GO:1904385">
    <property type="term" value="P:cellular response to angiotensin"/>
    <property type="evidence" value="ECO:0007669"/>
    <property type="project" value="Ensembl"/>
</dbReference>
<dbReference type="GO" id="GO:0007173">
    <property type="term" value="P:epidermal growth factor receptor signaling pathway"/>
    <property type="evidence" value="ECO:0007669"/>
    <property type="project" value="Ensembl"/>
</dbReference>
<dbReference type="GO" id="GO:0030026">
    <property type="term" value="P:intracellular manganese ion homeostasis"/>
    <property type="evidence" value="ECO:0007669"/>
    <property type="project" value="Ensembl"/>
</dbReference>
<dbReference type="GO" id="GO:0006882">
    <property type="term" value="P:intracellular zinc ion homeostasis"/>
    <property type="evidence" value="ECO:0000250"/>
    <property type="project" value="UniProtKB"/>
</dbReference>
<dbReference type="GO" id="GO:0140048">
    <property type="term" value="P:manganese ion export across plasma membrane"/>
    <property type="evidence" value="ECO:0000250"/>
    <property type="project" value="UniProtKB"/>
</dbReference>
<dbReference type="GO" id="GO:0055071">
    <property type="term" value="P:manganese ion homeostasis"/>
    <property type="evidence" value="ECO:0000315"/>
    <property type="project" value="UniProtKB"/>
</dbReference>
<dbReference type="GO" id="GO:0070374">
    <property type="term" value="P:positive regulation of ERK1 and ERK2 cascade"/>
    <property type="evidence" value="ECO:0007669"/>
    <property type="project" value="Ensembl"/>
</dbReference>
<dbReference type="GO" id="GO:0062111">
    <property type="term" value="P:zinc ion import into organelle"/>
    <property type="evidence" value="ECO:0000250"/>
    <property type="project" value="UniProtKB"/>
</dbReference>
<dbReference type="Gene3D" id="1.20.1510.10">
    <property type="entry name" value="Cation efflux protein transmembrane domain"/>
    <property type="match status" value="1"/>
</dbReference>
<dbReference type="InterPro" id="IPR002524">
    <property type="entry name" value="Cation_efflux"/>
</dbReference>
<dbReference type="InterPro" id="IPR027469">
    <property type="entry name" value="Cation_efflux_TMD_sf"/>
</dbReference>
<dbReference type="NCBIfam" id="TIGR01297">
    <property type="entry name" value="CDF"/>
    <property type="match status" value="1"/>
</dbReference>
<dbReference type="PANTHER" id="PTHR45820:SF3">
    <property type="entry name" value="CALCIUM_MANGANESE ANTIPORTER SLC30A10"/>
    <property type="match status" value="1"/>
</dbReference>
<dbReference type="PANTHER" id="PTHR45820">
    <property type="entry name" value="FI23527P1"/>
    <property type="match status" value="1"/>
</dbReference>
<dbReference type="Pfam" id="PF01545">
    <property type="entry name" value="Cation_efflux"/>
    <property type="match status" value="1"/>
</dbReference>
<dbReference type="SUPFAM" id="SSF161111">
    <property type="entry name" value="Cation efflux protein transmembrane domain-like"/>
    <property type="match status" value="1"/>
</dbReference>
<sequence>MGRYSGKTCRLLFMLVLTAAFFVAELVSGYLGNSIALLSDSFNMLSDLISLCVGLGSGYIARRGPRGSSATYGYVRAEVVGALSNAVFLTALCFTIFVEAVLRLARPERIDDPELVLIVGALGLAVNVVGLLIFQDCGACFSRCTRGRRTRPSQQPSQGDPRGALGCPQEAATATAPGSGTAVTLRGSSAGRKQQEGATVFSNVAGDSLNTENEPEETTKKEKKSEALNIRGVLLHVMGDALGSVVVVITAIIFYVQPLRREDPCNWQCYIDPSLTVVMVIIILSSAFPLIKETAVILLQMVPKGVNMEELMSQLSTVPGISSVHEVHIWELISGKIIATLHIKHQKGTEYQDASRKIREIFHHAGIHNVTIQFETLDLKEALEQKDFLLTCSAPCITQSCAKKLCCPPGTLPLALVNGCAEHNGRSSRESYRSIEAPEVAIDVDGCPREQGQTLSKTQERQHYENSTHF</sequence>
<feature type="chain" id="PRO_0000312581" description="Calcium/manganese antiporter SLC30A10">
    <location>
        <begin position="1"/>
        <end position="470"/>
    </location>
</feature>
<feature type="topological domain" description="Cytoplasmic" evidence="2">
    <location>
        <begin position="1"/>
        <end position="10"/>
    </location>
</feature>
<feature type="transmembrane region" description="Helical" evidence="2">
    <location>
        <begin position="11"/>
        <end position="31"/>
    </location>
</feature>
<feature type="topological domain" description="Extracellular" evidence="2">
    <location>
        <begin position="32"/>
        <end position="34"/>
    </location>
</feature>
<feature type="transmembrane region" description="Helical" evidence="2">
    <location>
        <begin position="35"/>
        <end position="55"/>
    </location>
</feature>
<feature type="topological domain" description="Cytoplasmic" evidence="2">
    <location>
        <begin position="56"/>
        <end position="81"/>
    </location>
</feature>
<feature type="transmembrane region" description="Helical" evidence="2">
    <location>
        <begin position="82"/>
        <end position="102"/>
    </location>
</feature>
<feature type="topological domain" description="Extracellular" evidence="2">
    <location>
        <begin position="103"/>
        <end position="113"/>
    </location>
</feature>
<feature type="transmembrane region" description="Helical" evidence="2">
    <location>
        <begin position="114"/>
        <end position="134"/>
    </location>
</feature>
<feature type="topological domain" description="Cytoplasmic" evidence="2">
    <location>
        <begin position="135"/>
        <end position="233"/>
    </location>
</feature>
<feature type="transmembrane region" description="Helical" evidence="2">
    <location>
        <begin position="234"/>
        <end position="254"/>
    </location>
</feature>
<feature type="topological domain" description="Extracellular" evidence="2">
    <location>
        <begin position="255"/>
        <end position="270"/>
    </location>
</feature>
<feature type="transmembrane region" description="Helical" evidence="2">
    <location>
        <begin position="271"/>
        <end position="291"/>
    </location>
</feature>
<feature type="topological domain" description="Cytoplasmic" evidence="2">
    <location>
        <begin position="292"/>
        <end position="470"/>
    </location>
</feature>
<feature type="region of interest" description="Disordered" evidence="3">
    <location>
        <begin position="146"/>
        <end position="223"/>
    </location>
</feature>
<feature type="region of interest" description="Required for plasma membrane localization" evidence="1">
    <location>
        <begin position="300"/>
        <end position="470"/>
    </location>
</feature>
<feature type="region of interest" description="Disordered" evidence="3">
    <location>
        <begin position="451"/>
        <end position="470"/>
    </location>
</feature>
<feature type="compositionally biased region" description="Low complexity" evidence="3">
    <location>
        <begin position="171"/>
        <end position="184"/>
    </location>
</feature>
<feature type="compositionally biased region" description="Basic and acidic residues" evidence="3">
    <location>
        <begin position="458"/>
        <end position="470"/>
    </location>
</feature>
<feature type="site" description="Important for coupling of manganese to calcium transport" evidence="1">
    <location>
        <position position="43"/>
    </location>
</feature>
<feature type="splice variant" id="VSP_029867" description="In isoform 2." evidence="5">
    <location>
        <begin position="1"/>
        <end position="237"/>
    </location>
</feature>
<feature type="sequence conflict" description="In Ref. 2; AAI08420." evidence="6" ref="2">
    <original>A</original>
    <variation>S</variation>
    <location>
        <position position="339"/>
    </location>
</feature>
<comment type="function">
    <text evidence="1 4">Calcium:manganese antiporter of the plasma membrane mediating the efflux of intracellular manganese coupled to an active extracellular calcium exchange. Required for intracellular manganese homeostasis, an essential cation for the function of several enzymes, including some crucially important for the metabolism of neurotransmitters and other neuronal metabolic pathways. Manganese can also be cytotoxic and induce oxidative stress, mitochondrial dysfunction and apoptosis (PubMed:28461334). Could also have an intracellular zinc ion transporter activity, directly regulating intracellular zinc ion homeostasis and more indirectly various signaling pathway and biological processes (By similarity).</text>
</comment>
<comment type="catalytic activity">
    <reaction evidence="4">
        <text>Mn(2+)(out) + Ca(2+)(in) = Mn(2+)(in) + Ca(2+)(out)</text>
        <dbReference type="Rhea" id="RHEA:73059"/>
        <dbReference type="ChEBI" id="CHEBI:29035"/>
        <dbReference type="ChEBI" id="CHEBI:29108"/>
    </reaction>
</comment>
<comment type="catalytic activity">
    <reaction evidence="1">
        <text>Zn(2+)(in) = Zn(2+)(out)</text>
        <dbReference type="Rhea" id="RHEA:29351"/>
        <dbReference type="ChEBI" id="CHEBI:29105"/>
    </reaction>
</comment>
<comment type="subunit">
    <text evidence="1">Forms homodimers. Forms heterodimers and high-molecular weight oligomers with SLC30A3, SLC30A2 and SLC30A4; heterodimerization is mediated by covalent-bound tyrosine residues, occurs probably in a tissue-specific manner and could mediate the intracellular zinc transport activity into early endosomes and recycling endosomes.</text>
</comment>
<comment type="interaction">
    <interactant intactId="EBI-13945374">
        <id>Q3UVU3</id>
    </interactant>
    <interactant intactId="EBI-13945312">
        <id>Q2HJ10</id>
        <label>Slc30a2</label>
    </interactant>
    <organismsDiffer>false</organismsDiffer>
    <experiments>2</experiments>
</comment>
<comment type="subcellular location">
    <subcellularLocation>
        <location evidence="1">Cell membrane</location>
        <topology evidence="2">Multi-pass membrane protein</topology>
    </subcellularLocation>
    <subcellularLocation>
        <location evidence="1">Golgi apparatus membrane</location>
        <topology evidence="2">Multi-pass membrane protein</topology>
    </subcellularLocation>
    <subcellularLocation>
        <location evidence="1">Recycling endosome membrane</location>
    </subcellularLocation>
    <subcellularLocation>
        <location evidence="1">Early endosome membrane</location>
        <topology evidence="2">Multi-pass membrane protein</topology>
    </subcellularLocation>
    <text evidence="1">Localization to the Golgi and plasma membrane is regulated by zinc.</text>
</comment>
<comment type="alternative products">
    <event type="alternative splicing"/>
    <isoform>
        <id>Q3UVU3-1</id>
        <name>1</name>
        <sequence type="displayed"/>
    </isoform>
    <isoform>
        <id>Q3UVU3-2</id>
        <name>2</name>
        <sequence type="described" ref="VSP_029867"/>
    </isoform>
</comment>
<comment type="tissue specificity">
    <text>Specifically expressed in fetal liver and fetal brain.</text>
</comment>
<comment type="disruption phenotype">
    <text evidence="4">Homozygous knockout mice lacking Slc30a10 are born at expected Mendelian ratios and do not display overt phenotype until postnatal day 16 to 18 (PubMed:28461334). After weaning they fail to gain weight, are smaller, and die prematurely (PubMed:28461334). Manganese levels are elevated in the tested tissues including brain, liver, blood and thyroid and manganese toxicity induces an hypothyroidism phenotype (PubMed:28461334).</text>
</comment>
<comment type="similarity">
    <text evidence="6">Belongs to the cation diffusion facilitator (CDF) transporter (TC 2.A.4) family. SLC30A subfamily.</text>
</comment>
<organism>
    <name type="scientific">Mus musculus</name>
    <name type="common">Mouse</name>
    <dbReference type="NCBI Taxonomy" id="10090"/>
    <lineage>
        <taxon>Eukaryota</taxon>
        <taxon>Metazoa</taxon>
        <taxon>Chordata</taxon>
        <taxon>Craniata</taxon>
        <taxon>Vertebrata</taxon>
        <taxon>Euteleostomi</taxon>
        <taxon>Mammalia</taxon>
        <taxon>Eutheria</taxon>
        <taxon>Euarchontoglires</taxon>
        <taxon>Glires</taxon>
        <taxon>Rodentia</taxon>
        <taxon>Myomorpha</taxon>
        <taxon>Muroidea</taxon>
        <taxon>Muridae</taxon>
        <taxon>Murinae</taxon>
        <taxon>Mus</taxon>
        <taxon>Mus</taxon>
    </lineage>
</organism>
<reference key="1">
    <citation type="journal article" date="2005" name="Science">
        <title>The transcriptional landscape of the mammalian genome.</title>
        <authorList>
            <person name="Carninci P."/>
            <person name="Kasukawa T."/>
            <person name="Katayama S."/>
            <person name="Gough J."/>
            <person name="Frith M.C."/>
            <person name="Maeda N."/>
            <person name="Oyama R."/>
            <person name="Ravasi T."/>
            <person name="Lenhard B."/>
            <person name="Wells C."/>
            <person name="Kodzius R."/>
            <person name="Shimokawa K."/>
            <person name="Bajic V.B."/>
            <person name="Brenner S.E."/>
            <person name="Batalov S."/>
            <person name="Forrest A.R."/>
            <person name="Zavolan M."/>
            <person name="Davis M.J."/>
            <person name="Wilming L.G."/>
            <person name="Aidinis V."/>
            <person name="Allen J.E."/>
            <person name="Ambesi-Impiombato A."/>
            <person name="Apweiler R."/>
            <person name="Aturaliya R.N."/>
            <person name="Bailey T.L."/>
            <person name="Bansal M."/>
            <person name="Baxter L."/>
            <person name="Beisel K.W."/>
            <person name="Bersano T."/>
            <person name="Bono H."/>
            <person name="Chalk A.M."/>
            <person name="Chiu K.P."/>
            <person name="Choudhary V."/>
            <person name="Christoffels A."/>
            <person name="Clutterbuck D.R."/>
            <person name="Crowe M.L."/>
            <person name="Dalla E."/>
            <person name="Dalrymple B.P."/>
            <person name="de Bono B."/>
            <person name="Della Gatta G."/>
            <person name="di Bernardo D."/>
            <person name="Down T."/>
            <person name="Engstrom P."/>
            <person name="Fagiolini M."/>
            <person name="Faulkner G."/>
            <person name="Fletcher C.F."/>
            <person name="Fukushima T."/>
            <person name="Furuno M."/>
            <person name="Futaki S."/>
            <person name="Gariboldi M."/>
            <person name="Georgii-Hemming P."/>
            <person name="Gingeras T.R."/>
            <person name="Gojobori T."/>
            <person name="Green R.E."/>
            <person name="Gustincich S."/>
            <person name="Harbers M."/>
            <person name="Hayashi Y."/>
            <person name="Hensch T.K."/>
            <person name="Hirokawa N."/>
            <person name="Hill D."/>
            <person name="Huminiecki L."/>
            <person name="Iacono M."/>
            <person name="Ikeo K."/>
            <person name="Iwama A."/>
            <person name="Ishikawa T."/>
            <person name="Jakt M."/>
            <person name="Kanapin A."/>
            <person name="Katoh M."/>
            <person name="Kawasawa Y."/>
            <person name="Kelso J."/>
            <person name="Kitamura H."/>
            <person name="Kitano H."/>
            <person name="Kollias G."/>
            <person name="Krishnan S.P."/>
            <person name="Kruger A."/>
            <person name="Kummerfeld S.K."/>
            <person name="Kurochkin I.V."/>
            <person name="Lareau L.F."/>
            <person name="Lazarevic D."/>
            <person name="Lipovich L."/>
            <person name="Liu J."/>
            <person name="Liuni S."/>
            <person name="McWilliam S."/>
            <person name="Madan Babu M."/>
            <person name="Madera M."/>
            <person name="Marchionni L."/>
            <person name="Matsuda H."/>
            <person name="Matsuzawa S."/>
            <person name="Miki H."/>
            <person name="Mignone F."/>
            <person name="Miyake S."/>
            <person name="Morris K."/>
            <person name="Mottagui-Tabar S."/>
            <person name="Mulder N."/>
            <person name="Nakano N."/>
            <person name="Nakauchi H."/>
            <person name="Ng P."/>
            <person name="Nilsson R."/>
            <person name="Nishiguchi S."/>
            <person name="Nishikawa S."/>
            <person name="Nori F."/>
            <person name="Ohara O."/>
            <person name="Okazaki Y."/>
            <person name="Orlando V."/>
            <person name="Pang K.C."/>
            <person name="Pavan W.J."/>
            <person name="Pavesi G."/>
            <person name="Pesole G."/>
            <person name="Petrovsky N."/>
            <person name="Piazza S."/>
            <person name="Reed J."/>
            <person name="Reid J.F."/>
            <person name="Ring B.Z."/>
            <person name="Ringwald M."/>
            <person name="Rost B."/>
            <person name="Ruan Y."/>
            <person name="Salzberg S.L."/>
            <person name="Sandelin A."/>
            <person name="Schneider C."/>
            <person name="Schoenbach C."/>
            <person name="Sekiguchi K."/>
            <person name="Semple C.A."/>
            <person name="Seno S."/>
            <person name="Sessa L."/>
            <person name="Sheng Y."/>
            <person name="Shibata Y."/>
            <person name="Shimada H."/>
            <person name="Shimada K."/>
            <person name="Silva D."/>
            <person name="Sinclair B."/>
            <person name="Sperling S."/>
            <person name="Stupka E."/>
            <person name="Sugiura K."/>
            <person name="Sultana R."/>
            <person name="Takenaka Y."/>
            <person name="Taki K."/>
            <person name="Tammoja K."/>
            <person name="Tan S.L."/>
            <person name="Tang S."/>
            <person name="Taylor M.S."/>
            <person name="Tegner J."/>
            <person name="Teichmann S.A."/>
            <person name="Ueda H.R."/>
            <person name="van Nimwegen E."/>
            <person name="Verardo R."/>
            <person name="Wei C.L."/>
            <person name="Yagi K."/>
            <person name="Yamanishi H."/>
            <person name="Zabarovsky E."/>
            <person name="Zhu S."/>
            <person name="Zimmer A."/>
            <person name="Hide W."/>
            <person name="Bult C."/>
            <person name="Grimmond S.M."/>
            <person name="Teasdale R.D."/>
            <person name="Liu E.T."/>
            <person name="Brusic V."/>
            <person name="Quackenbush J."/>
            <person name="Wahlestedt C."/>
            <person name="Mattick J.S."/>
            <person name="Hume D.A."/>
            <person name="Kai C."/>
            <person name="Sasaki D."/>
            <person name="Tomaru Y."/>
            <person name="Fukuda S."/>
            <person name="Kanamori-Katayama M."/>
            <person name="Suzuki M."/>
            <person name="Aoki J."/>
            <person name="Arakawa T."/>
            <person name="Iida J."/>
            <person name="Imamura K."/>
            <person name="Itoh M."/>
            <person name="Kato T."/>
            <person name="Kawaji H."/>
            <person name="Kawagashira N."/>
            <person name="Kawashima T."/>
            <person name="Kojima M."/>
            <person name="Kondo S."/>
            <person name="Konno H."/>
            <person name="Nakano K."/>
            <person name="Ninomiya N."/>
            <person name="Nishio T."/>
            <person name="Okada M."/>
            <person name="Plessy C."/>
            <person name="Shibata K."/>
            <person name="Shiraki T."/>
            <person name="Suzuki S."/>
            <person name="Tagami M."/>
            <person name="Waki K."/>
            <person name="Watahiki A."/>
            <person name="Okamura-Oho Y."/>
            <person name="Suzuki H."/>
            <person name="Kawai J."/>
            <person name="Hayashizaki Y."/>
        </authorList>
    </citation>
    <scope>NUCLEOTIDE SEQUENCE [LARGE SCALE MRNA] (ISOFORM 1)</scope>
    <source>
        <strain>C57BL/6J</strain>
        <tissue>Diencephalon</tissue>
    </source>
</reference>
<reference key="2">
    <citation type="journal article" date="2004" name="Genome Res.">
        <title>The status, quality, and expansion of the NIH full-length cDNA project: the Mammalian Gene Collection (MGC).</title>
        <authorList>
            <consortium name="The MGC Project Team"/>
        </authorList>
    </citation>
    <scope>NUCLEOTIDE SEQUENCE [LARGE SCALE MRNA] (ISOFORM 2)</scope>
    <source>
        <strain>C57BL/6J</strain>
        <tissue>Brain</tissue>
    </source>
</reference>
<reference key="3">
    <citation type="journal article" date="2007" name="Proc. Natl. Acad. Sci. U.S.A.">
        <title>Large-scale phosphorylation analysis of mouse liver.</title>
        <authorList>
            <person name="Villen J."/>
            <person name="Beausoleil S.A."/>
            <person name="Gerber S.A."/>
            <person name="Gygi S.P."/>
        </authorList>
    </citation>
    <scope>IDENTIFICATION BY MASS SPECTROMETRY [LARGE SCALE ANALYSIS]</scope>
    <source>
        <tissue>Liver</tissue>
    </source>
</reference>
<reference key="4">
    <citation type="journal article" date="2017" name="J. Biol. Chem.">
        <title>Deficiency in the manganese efflux transporter SLC30A10 induces severe hypothyroidism in mice.</title>
        <authorList>
            <person name="Hutchens S."/>
            <person name="Liu C."/>
            <person name="Jursa T."/>
            <person name="Shawlot W."/>
            <person name="Chaffee B.K."/>
            <person name="Yin W."/>
            <person name="Gore A.C."/>
            <person name="Aschner M."/>
            <person name="Smith D.R."/>
            <person name="Mukhopadhyay S."/>
        </authorList>
    </citation>
    <scope>FUNCTION</scope>
    <scope>DISRUPTION PHENOTYPE</scope>
</reference>
<evidence type="ECO:0000250" key="1">
    <source>
        <dbReference type="UniProtKB" id="Q6XR72"/>
    </source>
</evidence>
<evidence type="ECO:0000255" key="2"/>
<evidence type="ECO:0000256" key="3">
    <source>
        <dbReference type="SAM" id="MobiDB-lite"/>
    </source>
</evidence>
<evidence type="ECO:0000269" key="4">
    <source>
    </source>
</evidence>
<evidence type="ECO:0000303" key="5">
    <source>
    </source>
</evidence>
<evidence type="ECO:0000305" key="6"/>
<evidence type="ECO:0000305" key="7">
    <source>
    </source>
</evidence>
<evidence type="ECO:0000312" key="8">
    <source>
        <dbReference type="MGI" id="MGI:2685058"/>
    </source>
</evidence>
<name>ZNT10_MOUSE</name>
<accession>Q3UVU3</accession>
<accession>Q32NY2</accession>
<gene>
    <name evidence="8" type="primary">Slc30a10</name>
</gene>
<keyword id="KW-0025">Alternative splicing</keyword>
<keyword id="KW-1003">Cell membrane</keyword>
<keyword id="KW-0967">Endosome</keyword>
<keyword id="KW-0333">Golgi apparatus</keyword>
<keyword id="KW-0406">Ion transport</keyword>
<keyword id="KW-0464">Manganese</keyword>
<keyword id="KW-0472">Membrane</keyword>
<keyword id="KW-1185">Reference proteome</keyword>
<keyword id="KW-0812">Transmembrane</keyword>
<keyword id="KW-1133">Transmembrane helix</keyword>
<keyword id="KW-0813">Transport</keyword>
<keyword id="KW-0862">Zinc</keyword>
<keyword id="KW-0864">Zinc transport</keyword>
<proteinExistence type="evidence at protein level"/>